<keyword id="KW-0028">Amino-acid biosynthesis</keyword>
<keyword id="KW-0057">Aromatic amino acid biosynthesis</keyword>
<keyword id="KW-0170">Cobalt</keyword>
<keyword id="KW-0963">Cytoplasm</keyword>
<keyword id="KW-0456">Lyase</keyword>
<keyword id="KW-0479">Metal-binding</keyword>
<keyword id="KW-0520">NAD</keyword>
<keyword id="KW-0547">Nucleotide-binding</keyword>
<keyword id="KW-1185">Reference proteome</keyword>
<keyword id="KW-0862">Zinc</keyword>
<accession>A7MKL4</accession>
<dbReference type="EC" id="4.2.3.4" evidence="1"/>
<dbReference type="EMBL" id="CP000783">
    <property type="protein sequence ID" value="ABU79531.1"/>
    <property type="molecule type" value="Genomic_DNA"/>
</dbReference>
<dbReference type="RefSeq" id="WP_012126396.1">
    <property type="nucleotide sequence ID" value="NC_009778.1"/>
</dbReference>
<dbReference type="SMR" id="A7MKL4"/>
<dbReference type="KEGG" id="esa:ESA_04352"/>
<dbReference type="PATRIC" id="fig|290339.8.peg.3878"/>
<dbReference type="HOGENOM" id="CLU_001201_0_2_6"/>
<dbReference type="UniPathway" id="UPA00053">
    <property type="reaction ID" value="UER00085"/>
</dbReference>
<dbReference type="Proteomes" id="UP000000260">
    <property type="component" value="Chromosome"/>
</dbReference>
<dbReference type="GO" id="GO:0005737">
    <property type="term" value="C:cytoplasm"/>
    <property type="evidence" value="ECO:0007669"/>
    <property type="project" value="UniProtKB-SubCell"/>
</dbReference>
<dbReference type="GO" id="GO:0003856">
    <property type="term" value="F:3-dehydroquinate synthase activity"/>
    <property type="evidence" value="ECO:0007669"/>
    <property type="project" value="UniProtKB-UniRule"/>
</dbReference>
<dbReference type="GO" id="GO:0046872">
    <property type="term" value="F:metal ion binding"/>
    <property type="evidence" value="ECO:0007669"/>
    <property type="project" value="UniProtKB-KW"/>
</dbReference>
<dbReference type="GO" id="GO:0000166">
    <property type="term" value="F:nucleotide binding"/>
    <property type="evidence" value="ECO:0007669"/>
    <property type="project" value="UniProtKB-KW"/>
</dbReference>
<dbReference type="GO" id="GO:0008652">
    <property type="term" value="P:amino acid biosynthetic process"/>
    <property type="evidence" value="ECO:0007669"/>
    <property type="project" value="UniProtKB-KW"/>
</dbReference>
<dbReference type="GO" id="GO:0009073">
    <property type="term" value="P:aromatic amino acid family biosynthetic process"/>
    <property type="evidence" value="ECO:0007669"/>
    <property type="project" value="UniProtKB-KW"/>
</dbReference>
<dbReference type="GO" id="GO:0009423">
    <property type="term" value="P:chorismate biosynthetic process"/>
    <property type="evidence" value="ECO:0007669"/>
    <property type="project" value="UniProtKB-UniRule"/>
</dbReference>
<dbReference type="CDD" id="cd08195">
    <property type="entry name" value="DHQS"/>
    <property type="match status" value="1"/>
</dbReference>
<dbReference type="FunFam" id="1.20.1090.10:FF:000002">
    <property type="entry name" value="3-dehydroquinate synthase"/>
    <property type="match status" value="1"/>
</dbReference>
<dbReference type="FunFam" id="3.40.50.1970:FF:000001">
    <property type="entry name" value="3-dehydroquinate synthase"/>
    <property type="match status" value="1"/>
</dbReference>
<dbReference type="Gene3D" id="3.40.50.1970">
    <property type="match status" value="1"/>
</dbReference>
<dbReference type="Gene3D" id="1.20.1090.10">
    <property type="entry name" value="Dehydroquinate synthase-like - alpha domain"/>
    <property type="match status" value="1"/>
</dbReference>
<dbReference type="HAMAP" id="MF_00110">
    <property type="entry name" value="DHQ_synthase"/>
    <property type="match status" value="1"/>
</dbReference>
<dbReference type="InterPro" id="IPR050071">
    <property type="entry name" value="Dehydroquinate_synthase"/>
</dbReference>
<dbReference type="InterPro" id="IPR016037">
    <property type="entry name" value="DHQ_synth_AroB"/>
</dbReference>
<dbReference type="InterPro" id="IPR030963">
    <property type="entry name" value="DHQ_synth_fam"/>
</dbReference>
<dbReference type="InterPro" id="IPR030960">
    <property type="entry name" value="DHQS/DOIS_N"/>
</dbReference>
<dbReference type="InterPro" id="IPR056179">
    <property type="entry name" value="DHQS_C"/>
</dbReference>
<dbReference type="NCBIfam" id="TIGR01357">
    <property type="entry name" value="aroB"/>
    <property type="match status" value="1"/>
</dbReference>
<dbReference type="PANTHER" id="PTHR43622">
    <property type="entry name" value="3-DEHYDROQUINATE SYNTHASE"/>
    <property type="match status" value="1"/>
</dbReference>
<dbReference type="PANTHER" id="PTHR43622:SF7">
    <property type="entry name" value="3-DEHYDROQUINATE SYNTHASE, CHLOROPLASTIC"/>
    <property type="match status" value="1"/>
</dbReference>
<dbReference type="Pfam" id="PF01761">
    <property type="entry name" value="DHQ_synthase"/>
    <property type="match status" value="1"/>
</dbReference>
<dbReference type="Pfam" id="PF24621">
    <property type="entry name" value="DHQS_C"/>
    <property type="match status" value="1"/>
</dbReference>
<dbReference type="PIRSF" id="PIRSF001455">
    <property type="entry name" value="DHQ_synth"/>
    <property type="match status" value="1"/>
</dbReference>
<dbReference type="SUPFAM" id="SSF56796">
    <property type="entry name" value="Dehydroquinate synthase-like"/>
    <property type="match status" value="1"/>
</dbReference>
<comment type="function">
    <text evidence="1">Catalyzes the conversion of 3-deoxy-D-arabino-heptulosonate 7-phosphate (DAHP) to dehydroquinate (DHQ).</text>
</comment>
<comment type="catalytic activity">
    <reaction evidence="1">
        <text>7-phospho-2-dehydro-3-deoxy-D-arabino-heptonate = 3-dehydroquinate + phosphate</text>
        <dbReference type="Rhea" id="RHEA:21968"/>
        <dbReference type="ChEBI" id="CHEBI:32364"/>
        <dbReference type="ChEBI" id="CHEBI:43474"/>
        <dbReference type="ChEBI" id="CHEBI:58394"/>
        <dbReference type="EC" id="4.2.3.4"/>
    </reaction>
</comment>
<comment type="cofactor">
    <cofactor evidence="1">
        <name>Co(2+)</name>
        <dbReference type="ChEBI" id="CHEBI:48828"/>
    </cofactor>
    <cofactor evidence="1">
        <name>Zn(2+)</name>
        <dbReference type="ChEBI" id="CHEBI:29105"/>
    </cofactor>
    <text evidence="1">Binds 1 divalent metal cation per subunit. Can use either Co(2+) or Zn(2+).</text>
</comment>
<comment type="cofactor">
    <cofactor evidence="1">
        <name>NAD(+)</name>
        <dbReference type="ChEBI" id="CHEBI:57540"/>
    </cofactor>
</comment>
<comment type="pathway">
    <text evidence="1">Metabolic intermediate biosynthesis; chorismate biosynthesis; chorismate from D-erythrose 4-phosphate and phosphoenolpyruvate: step 2/7.</text>
</comment>
<comment type="subcellular location">
    <subcellularLocation>
        <location evidence="1">Cytoplasm</location>
    </subcellularLocation>
</comment>
<comment type="similarity">
    <text evidence="1">Belongs to the sugar phosphate cyclases superfamily. Dehydroquinate synthase family.</text>
</comment>
<feature type="chain" id="PRO_1000094515" description="3-dehydroquinate synthase">
    <location>
        <begin position="1"/>
        <end position="362"/>
    </location>
</feature>
<feature type="binding site" evidence="1">
    <location>
        <begin position="71"/>
        <end position="76"/>
    </location>
    <ligand>
        <name>NAD(+)</name>
        <dbReference type="ChEBI" id="CHEBI:57540"/>
    </ligand>
</feature>
<feature type="binding site" evidence="1">
    <location>
        <begin position="105"/>
        <end position="109"/>
    </location>
    <ligand>
        <name>NAD(+)</name>
        <dbReference type="ChEBI" id="CHEBI:57540"/>
    </ligand>
</feature>
<feature type="binding site" evidence="1">
    <location>
        <begin position="129"/>
        <end position="130"/>
    </location>
    <ligand>
        <name>NAD(+)</name>
        <dbReference type="ChEBI" id="CHEBI:57540"/>
    </ligand>
</feature>
<feature type="binding site" evidence="1">
    <location>
        <position position="142"/>
    </location>
    <ligand>
        <name>NAD(+)</name>
        <dbReference type="ChEBI" id="CHEBI:57540"/>
    </ligand>
</feature>
<feature type="binding site" evidence="1">
    <location>
        <position position="151"/>
    </location>
    <ligand>
        <name>NAD(+)</name>
        <dbReference type="ChEBI" id="CHEBI:57540"/>
    </ligand>
</feature>
<feature type="binding site" evidence="1">
    <location>
        <begin position="169"/>
        <end position="172"/>
    </location>
    <ligand>
        <name>NAD(+)</name>
        <dbReference type="ChEBI" id="CHEBI:57540"/>
    </ligand>
</feature>
<feature type="binding site" evidence="1">
    <location>
        <position position="184"/>
    </location>
    <ligand>
        <name>Zn(2+)</name>
        <dbReference type="ChEBI" id="CHEBI:29105"/>
    </ligand>
</feature>
<feature type="binding site" evidence="1">
    <location>
        <position position="247"/>
    </location>
    <ligand>
        <name>Zn(2+)</name>
        <dbReference type="ChEBI" id="CHEBI:29105"/>
    </ligand>
</feature>
<feature type="binding site" evidence="1">
    <location>
        <position position="264"/>
    </location>
    <ligand>
        <name>Zn(2+)</name>
        <dbReference type="ChEBI" id="CHEBI:29105"/>
    </ligand>
</feature>
<protein>
    <recommendedName>
        <fullName evidence="1">3-dehydroquinate synthase</fullName>
        <shortName evidence="1">DHQS</shortName>
        <ecNumber evidence="1">4.2.3.4</ecNumber>
    </recommendedName>
</protein>
<evidence type="ECO:0000255" key="1">
    <source>
        <dbReference type="HAMAP-Rule" id="MF_00110"/>
    </source>
</evidence>
<sequence length="362" mass="39025">MERLTVTLGERSYPITIAAGLFNDPASFWPLRAGDQTMLVTNETLAPLWLDKVRSALEQAGVKVDQVILPDGEQYKSLAVLETVFSALLEKPHGRDTTLIALGGGVIGDLTGFAAACYQRGVRFIQVPTTLLSQVDSSVGGKTAVNHPLGKNMIGAFWQPASVVVDLDCLQTLPARELASGLAEVIKYGIILDRDFFLWLEENIDALLALDGAAMAYCIRRCCEIKADVVAADERESGMRALLNLGHTFGHAIEAEMGYGNWLHGEAVAAGMVMAARAAERLGQFETQDVERIIALLKRAGLPVTGPETMPPQAYLPHMMRDKKVLAGELRLVLPLAIGKSEVRGGVPHDLVLSAIADCQQA</sequence>
<proteinExistence type="inferred from homology"/>
<name>AROB_CROS8</name>
<reference key="1">
    <citation type="journal article" date="2010" name="PLoS ONE">
        <title>Genome sequence of Cronobacter sakazakii BAA-894 and comparative genomic hybridization analysis with other Cronobacter species.</title>
        <authorList>
            <person name="Kucerova E."/>
            <person name="Clifton S.W."/>
            <person name="Xia X.Q."/>
            <person name="Long F."/>
            <person name="Porwollik S."/>
            <person name="Fulton L."/>
            <person name="Fronick C."/>
            <person name="Minx P."/>
            <person name="Kyung K."/>
            <person name="Warren W."/>
            <person name="Fulton R."/>
            <person name="Feng D."/>
            <person name="Wollam A."/>
            <person name="Shah N."/>
            <person name="Bhonagiri V."/>
            <person name="Nash W.E."/>
            <person name="Hallsworth-Pepin K."/>
            <person name="Wilson R.K."/>
            <person name="McClelland M."/>
            <person name="Forsythe S.J."/>
        </authorList>
    </citation>
    <scope>NUCLEOTIDE SEQUENCE [LARGE SCALE GENOMIC DNA]</scope>
    <source>
        <strain>ATCC BAA-894</strain>
    </source>
</reference>
<organism>
    <name type="scientific">Cronobacter sakazakii (strain ATCC BAA-894)</name>
    <name type="common">Enterobacter sakazakii</name>
    <dbReference type="NCBI Taxonomy" id="290339"/>
    <lineage>
        <taxon>Bacteria</taxon>
        <taxon>Pseudomonadati</taxon>
        <taxon>Pseudomonadota</taxon>
        <taxon>Gammaproteobacteria</taxon>
        <taxon>Enterobacterales</taxon>
        <taxon>Enterobacteriaceae</taxon>
        <taxon>Cronobacter</taxon>
    </lineage>
</organism>
<gene>
    <name evidence="1" type="primary">aroB</name>
    <name type="ordered locus">ESA_04352</name>
</gene>